<sequence>MCASVTESLPKFPELKTRDLQGQQGPIRSLGWNLSGSRLASSSSSGSVLVWNSDRLDFKFTTELGNRGYGLVEQLVWDPTHSDRLMAVYAGKMIRFWDFRSAKPIAEIESNYENIYATWSPSGNYCCASSRDDMLSFIDARERRIMETFQQPCETNECCWSFSEDLFFMTTGLGTVQIMEWPSLKRVYDIKAHNSNCFCIEFSPDNRHLAIGGADAITSLWDPQELICERSITRMDYPIRTLSFSYDSRYLASGSEDRYVDIADTKTGDQIWKIPTNGPLNKVAWHPTKHILAYAVSEPNSSGLKIFGL</sequence>
<gene>
    <name type="primary">THO3</name>
    <name type="ORF">SPCC18B5.10c</name>
</gene>
<proteinExistence type="inferred from homology"/>
<organism>
    <name type="scientific">Schizosaccharomyces pombe (strain 972 / ATCC 24843)</name>
    <name type="common">Fission yeast</name>
    <dbReference type="NCBI Taxonomy" id="284812"/>
    <lineage>
        <taxon>Eukaryota</taxon>
        <taxon>Fungi</taxon>
        <taxon>Dikarya</taxon>
        <taxon>Ascomycota</taxon>
        <taxon>Taphrinomycotina</taxon>
        <taxon>Schizosaccharomycetes</taxon>
        <taxon>Schizosaccharomycetales</taxon>
        <taxon>Schizosaccharomycetaceae</taxon>
        <taxon>Schizosaccharomyces</taxon>
    </lineage>
</organism>
<keyword id="KW-0539">Nucleus</keyword>
<keyword id="KW-1185">Reference proteome</keyword>
<keyword id="KW-0677">Repeat</keyword>
<keyword id="KW-0853">WD repeat</keyword>
<name>THOC3_SCHPO</name>
<protein>
    <recommendedName>
        <fullName>THO complex subunit Tho3</fullName>
    </recommendedName>
</protein>
<evidence type="ECO:0000250" key="1">
    <source>
        <dbReference type="UniProtKB" id="P53851"/>
    </source>
</evidence>
<evidence type="ECO:0000305" key="2"/>
<reference key="1">
    <citation type="journal article" date="2002" name="Nature">
        <title>The genome sequence of Schizosaccharomyces pombe.</title>
        <authorList>
            <person name="Wood V."/>
            <person name="Gwilliam R."/>
            <person name="Rajandream M.A."/>
            <person name="Lyne M.H."/>
            <person name="Lyne R."/>
            <person name="Stewart A."/>
            <person name="Sgouros J.G."/>
            <person name="Peat N."/>
            <person name="Hayles J."/>
            <person name="Baker S.G."/>
            <person name="Basham D."/>
            <person name="Bowman S."/>
            <person name="Brooks K."/>
            <person name="Brown D."/>
            <person name="Brown S."/>
            <person name="Chillingworth T."/>
            <person name="Churcher C.M."/>
            <person name="Collins M."/>
            <person name="Connor R."/>
            <person name="Cronin A."/>
            <person name="Davis P."/>
            <person name="Feltwell T."/>
            <person name="Fraser A."/>
            <person name="Gentles S."/>
            <person name="Goble A."/>
            <person name="Hamlin N."/>
            <person name="Harris D.E."/>
            <person name="Hidalgo J."/>
            <person name="Hodgson G."/>
            <person name="Holroyd S."/>
            <person name="Hornsby T."/>
            <person name="Howarth S."/>
            <person name="Huckle E.J."/>
            <person name="Hunt S."/>
            <person name="Jagels K."/>
            <person name="James K.D."/>
            <person name="Jones L."/>
            <person name="Jones M."/>
            <person name="Leather S."/>
            <person name="McDonald S."/>
            <person name="McLean J."/>
            <person name="Mooney P."/>
            <person name="Moule S."/>
            <person name="Mungall K.L."/>
            <person name="Murphy L.D."/>
            <person name="Niblett D."/>
            <person name="Odell C."/>
            <person name="Oliver K."/>
            <person name="O'Neil S."/>
            <person name="Pearson D."/>
            <person name="Quail M.A."/>
            <person name="Rabbinowitsch E."/>
            <person name="Rutherford K.M."/>
            <person name="Rutter S."/>
            <person name="Saunders D."/>
            <person name="Seeger K."/>
            <person name="Sharp S."/>
            <person name="Skelton J."/>
            <person name="Simmonds M.N."/>
            <person name="Squares R."/>
            <person name="Squares S."/>
            <person name="Stevens K."/>
            <person name="Taylor K."/>
            <person name="Taylor R.G."/>
            <person name="Tivey A."/>
            <person name="Walsh S.V."/>
            <person name="Warren T."/>
            <person name="Whitehead S."/>
            <person name="Woodward J.R."/>
            <person name="Volckaert G."/>
            <person name="Aert R."/>
            <person name="Robben J."/>
            <person name="Grymonprez B."/>
            <person name="Weltjens I."/>
            <person name="Vanstreels E."/>
            <person name="Rieger M."/>
            <person name="Schaefer M."/>
            <person name="Mueller-Auer S."/>
            <person name="Gabel C."/>
            <person name="Fuchs M."/>
            <person name="Duesterhoeft A."/>
            <person name="Fritzc C."/>
            <person name="Holzer E."/>
            <person name="Moestl D."/>
            <person name="Hilbert H."/>
            <person name="Borzym K."/>
            <person name="Langer I."/>
            <person name="Beck A."/>
            <person name="Lehrach H."/>
            <person name="Reinhardt R."/>
            <person name="Pohl T.M."/>
            <person name="Eger P."/>
            <person name="Zimmermann W."/>
            <person name="Wedler H."/>
            <person name="Wambutt R."/>
            <person name="Purnelle B."/>
            <person name="Goffeau A."/>
            <person name="Cadieu E."/>
            <person name="Dreano S."/>
            <person name="Gloux S."/>
            <person name="Lelaure V."/>
            <person name="Mottier S."/>
            <person name="Galibert F."/>
            <person name="Aves S.J."/>
            <person name="Xiang Z."/>
            <person name="Hunt C."/>
            <person name="Moore K."/>
            <person name="Hurst S.M."/>
            <person name="Lucas M."/>
            <person name="Rochet M."/>
            <person name="Gaillardin C."/>
            <person name="Tallada V.A."/>
            <person name="Garzon A."/>
            <person name="Thode G."/>
            <person name="Daga R.R."/>
            <person name="Cruzado L."/>
            <person name="Jimenez J."/>
            <person name="Sanchez M."/>
            <person name="del Rey F."/>
            <person name="Benito J."/>
            <person name="Dominguez A."/>
            <person name="Revuelta J.L."/>
            <person name="Moreno S."/>
            <person name="Armstrong J."/>
            <person name="Forsburg S.L."/>
            <person name="Cerutti L."/>
            <person name="Lowe T."/>
            <person name="McCombie W.R."/>
            <person name="Paulsen I."/>
            <person name="Potashkin J."/>
            <person name="Shpakovski G.V."/>
            <person name="Ussery D."/>
            <person name="Barrell B.G."/>
            <person name="Nurse P."/>
        </authorList>
    </citation>
    <scope>NUCLEOTIDE SEQUENCE [LARGE SCALE GENOMIC DNA]</scope>
    <source>
        <strain>972 / ATCC 24843</strain>
    </source>
</reference>
<dbReference type="EMBL" id="CU329672">
    <property type="protein sequence ID" value="CAB52157.1"/>
    <property type="molecule type" value="Genomic_DNA"/>
</dbReference>
<dbReference type="PIR" id="T41203">
    <property type="entry name" value="T41203"/>
</dbReference>
<dbReference type="RefSeq" id="NP_587940.1">
    <property type="nucleotide sequence ID" value="NM_001022931.1"/>
</dbReference>
<dbReference type="SMR" id="Q9USL1"/>
<dbReference type="BioGRID" id="275928">
    <property type="interactions" value="20"/>
</dbReference>
<dbReference type="FunCoup" id="Q9USL1">
    <property type="interactions" value="641"/>
</dbReference>
<dbReference type="STRING" id="284812.Q9USL1"/>
<dbReference type="iPTMnet" id="Q9USL1"/>
<dbReference type="PaxDb" id="4896-SPCC18B5.10c.1"/>
<dbReference type="EnsemblFungi" id="SPCC18B5.10c.1">
    <property type="protein sequence ID" value="SPCC18B5.10c.1:pep"/>
    <property type="gene ID" value="SPCC18B5.10c"/>
</dbReference>
<dbReference type="GeneID" id="2539362"/>
<dbReference type="KEGG" id="spo:2539362"/>
<dbReference type="PomBase" id="SPCC18B5.10c"/>
<dbReference type="VEuPathDB" id="FungiDB:SPCC18B5.10c"/>
<dbReference type="eggNOG" id="KOG1407">
    <property type="taxonomic scope" value="Eukaryota"/>
</dbReference>
<dbReference type="HOGENOM" id="CLU_045202_0_0_1"/>
<dbReference type="InParanoid" id="Q9USL1"/>
<dbReference type="OMA" id="WNADGRH"/>
<dbReference type="PhylomeDB" id="Q9USL1"/>
<dbReference type="PRO" id="PR:Q9USL1"/>
<dbReference type="Proteomes" id="UP000002485">
    <property type="component" value="Chromosome III"/>
</dbReference>
<dbReference type="GO" id="GO:0000445">
    <property type="term" value="C:THO complex part of transcription export complex"/>
    <property type="evidence" value="ECO:0000318"/>
    <property type="project" value="GO_Central"/>
</dbReference>
<dbReference type="GO" id="GO:0006406">
    <property type="term" value="P:mRNA export from nucleus"/>
    <property type="evidence" value="ECO:0000318"/>
    <property type="project" value="GO_Central"/>
</dbReference>
<dbReference type="GO" id="GO:0016973">
    <property type="term" value="P:poly(A)+ mRNA export from nucleus"/>
    <property type="evidence" value="ECO:0000305"/>
    <property type="project" value="PomBase"/>
</dbReference>
<dbReference type="FunFam" id="2.130.10.10:FF:002333">
    <property type="entry name" value="THO complex 3 G protein beta subunit"/>
    <property type="match status" value="1"/>
</dbReference>
<dbReference type="Gene3D" id="2.130.10.10">
    <property type="entry name" value="YVTN repeat-like/Quinoprotein amine dehydrogenase"/>
    <property type="match status" value="2"/>
</dbReference>
<dbReference type="InterPro" id="IPR040132">
    <property type="entry name" value="Tex1/THOC3"/>
</dbReference>
<dbReference type="InterPro" id="IPR015943">
    <property type="entry name" value="WD40/YVTN_repeat-like_dom_sf"/>
</dbReference>
<dbReference type="InterPro" id="IPR036322">
    <property type="entry name" value="WD40_repeat_dom_sf"/>
</dbReference>
<dbReference type="InterPro" id="IPR001680">
    <property type="entry name" value="WD40_rpt"/>
</dbReference>
<dbReference type="PANTHER" id="PTHR22839:SF0">
    <property type="entry name" value="THO COMPLEX SUBUNIT 3"/>
    <property type="match status" value="1"/>
</dbReference>
<dbReference type="PANTHER" id="PTHR22839">
    <property type="entry name" value="THO COMPLEX SUBUNIT 3 THO3"/>
    <property type="match status" value="1"/>
</dbReference>
<dbReference type="Pfam" id="PF25174">
    <property type="entry name" value="Beta-prop_THOC3"/>
    <property type="match status" value="1"/>
</dbReference>
<dbReference type="SMART" id="SM00320">
    <property type="entry name" value="WD40"/>
    <property type="match status" value="5"/>
</dbReference>
<dbReference type="SUPFAM" id="SSF50978">
    <property type="entry name" value="WD40 repeat-like"/>
    <property type="match status" value="1"/>
</dbReference>
<dbReference type="PROSITE" id="PS50082">
    <property type="entry name" value="WD_REPEATS_2"/>
    <property type="match status" value="2"/>
</dbReference>
<dbReference type="PROSITE" id="PS50294">
    <property type="entry name" value="WD_REPEATS_REGION"/>
    <property type="match status" value="1"/>
</dbReference>
<feature type="chain" id="PRO_0000316563" description="THO complex subunit Tho3">
    <location>
        <begin position="1"/>
        <end position="309"/>
    </location>
</feature>
<feature type="repeat" description="WD 1">
    <location>
        <begin position="22"/>
        <end position="61"/>
    </location>
</feature>
<feature type="repeat" description="WD 2">
    <location>
        <begin position="65"/>
        <end position="107"/>
    </location>
</feature>
<feature type="repeat" description="WD 3">
    <location>
        <begin position="109"/>
        <end position="148"/>
    </location>
</feature>
<feature type="repeat" description="WD 4">
    <location>
        <begin position="192"/>
        <end position="231"/>
    </location>
</feature>
<feature type="repeat" description="WD 5">
    <location>
        <begin position="234"/>
        <end position="273"/>
    </location>
</feature>
<feature type="repeat" description="WD 6">
    <location>
        <begin position="275"/>
        <end position="309"/>
    </location>
</feature>
<comment type="function">
    <text evidence="1">Component of the TREX complex, which operates in coupling transcription elongation to mRNA export.</text>
</comment>
<comment type="subunit">
    <text evidence="1">Component of the transcription/export (TREX) complex, which is at least is formed of SUB2, TEX1 and YRA1 and the THO complex composed of HPR1, MFT1, THO2 and THP1.</text>
</comment>
<comment type="subcellular location">
    <subcellularLocation>
        <location evidence="1">Nucleus</location>
    </subcellularLocation>
</comment>
<comment type="similarity">
    <text evidence="2">Belongs to the THOC3 family.</text>
</comment>
<accession>Q9USL1</accession>